<sequence>MGQKIHPYGLRLGITSEWRSRWYADKQYADYLAEDIKIRDFLSKGLERAGIADVVIERTRDRVRVDIHTARPGIVIGRRGAEADRIRGKLEKLTGKQVQLNILEVKNVDASAQLVAQSIAEQLSNRVAFRRAMRKAIQGAMRQPQVKGIKVVCSGRLGGAEMGRTERYHEGRVPLHTLRAEIDYGTFEAHTTFGRIGVKVWIYKGDVVGGRRESLINARDDRGSRRGRNDRPRRGGGRRRRAAEQKQEG</sequence>
<name>RS3_CORK4</name>
<gene>
    <name evidence="1" type="primary">rpsC</name>
    <name type="ordered locus">ckrop_1831</name>
</gene>
<reference key="1">
    <citation type="journal article" date="2008" name="J. Biotechnol.">
        <title>Ultrafast pyrosequencing of Corynebacterium kroppenstedtii DSM44385 revealed insights into the physiology of a lipophilic corynebacterium that lacks mycolic acids.</title>
        <authorList>
            <person name="Tauch A."/>
            <person name="Schneider J."/>
            <person name="Szczepanowski R."/>
            <person name="Tilker A."/>
            <person name="Viehoever P."/>
            <person name="Gartemann K.-H."/>
            <person name="Arnold W."/>
            <person name="Blom J."/>
            <person name="Brinkrolf K."/>
            <person name="Brune I."/>
            <person name="Goetker S."/>
            <person name="Weisshaar B."/>
            <person name="Goesmann A."/>
            <person name="Droege M."/>
            <person name="Puehler A."/>
        </authorList>
    </citation>
    <scope>NUCLEOTIDE SEQUENCE [LARGE SCALE GENOMIC DNA]</scope>
    <source>
        <strain>DSM 44385 / JCM 11950 / CIP 105744 / CCUG 35717</strain>
    </source>
</reference>
<evidence type="ECO:0000255" key="1">
    <source>
        <dbReference type="HAMAP-Rule" id="MF_01309"/>
    </source>
</evidence>
<evidence type="ECO:0000256" key="2">
    <source>
        <dbReference type="SAM" id="MobiDB-lite"/>
    </source>
</evidence>
<evidence type="ECO:0000305" key="3"/>
<keyword id="KW-1185">Reference proteome</keyword>
<keyword id="KW-0687">Ribonucleoprotein</keyword>
<keyword id="KW-0689">Ribosomal protein</keyword>
<keyword id="KW-0694">RNA-binding</keyword>
<keyword id="KW-0699">rRNA-binding</keyword>
<feature type="chain" id="PRO_1000214331" description="Small ribosomal subunit protein uS3">
    <location>
        <begin position="1"/>
        <end position="249"/>
    </location>
</feature>
<feature type="domain" description="KH type-2" evidence="1">
    <location>
        <begin position="38"/>
        <end position="106"/>
    </location>
</feature>
<feature type="region of interest" description="Disordered" evidence="2">
    <location>
        <begin position="218"/>
        <end position="249"/>
    </location>
</feature>
<feature type="compositionally biased region" description="Basic and acidic residues" evidence="2">
    <location>
        <begin position="218"/>
        <end position="233"/>
    </location>
</feature>
<dbReference type="EMBL" id="CP001620">
    <property type="protein sequence ID" value="ACR18551.1"/>
    <property type="molecule type" value="Genomic_DNA"/>
</dbReference>
<dbReference type="RefSeq" id="WP_012732438.1">
    <property type="nucleotide sequence ID" value="NC_012704.1"/>
</dbReference>
<dbReference type="SMR" id="C4LL46"/>
<dbReference type="STRING" id="645127.ckrop_1831"/>
<dbReference type="GeneID" id="92726628"/>
<dbReference type="KEGG" id="ckp:ckrop_1831"/>
<dbReference type="eggNOG" id="COG0092">
    <property type="taxonomic scope" value="Bacteria"/>
</dbReference>
<dbReference type="HOGENOM" id="CLU_058591_0_0_11"/>
<dbReference type="OrthoDB" id="9806396at2"/>
<dbReference type="Proteomes" id="UP000001473">
    <property type="component" value="Chromosome"/>
</dbReference>
<dbReference type="GO" id="GO:0022627">
    <property type="term" value="C:cytosolic small ribosomal subunit"/>
    <property type="evidence" value="ECO:0007669"/>
    <property type="project" value="TreeGrafter"/>
</dbReference>
<dbReference type="GO" id="GO:0003729">
    <property type="term" value="F:mRNA binding"/>
    <property type="evidence" value="ECO:0007669"/>
    <property type="project" value="UniProtKB-UniRule"/>
</dbReference>
<dbReference type="GO" id="GO:0019843">
    <property type="term" value="F:rRNA binding"/>
    <property type="evidence" value="ECO:0007669"/>
    <property type="project" value="UniProtKB-UniRule"/>
</dbReference>
<dbReference type="GO" id="GO:0003735">
    <property type="term" value="F:structural constituent of ribosome"/>
    <property type="evidence" value="ECO:0007669"/>
    <property type="project" value="InterPro"/>
</dbReference>
<dbReference type="GO" id="GO:0006412">
    <property type="term" value="P:translation"/>
    <property type="evidence" value="ECO:0007669"/>
    <property type="project" value="UniProtKB-UniRule"/>
</dbReference>
<dbReference type="CDD" id="cd02412">
    <property type="entry name" value="KH-II_30S_S3"/>
    <property type="match status" value="1"/>
</dbReference>
<dbReference type="FunFam" id="3.30.1140.32:FF:000002">
    <property type="entry name" value="30S ribosomal protein S3"/>
    <property type="match status" value="1"/>
</dbReference>
<dbReference type="FunFam" id="3.30.300.20:FF:000001">
    <property type="entry name" value="30S ribosomal protein S3"/>
    <property type="match status" value="1"/>
</dbReference>
<dbReference type="Gene3D" id="3.30.300.20">
    <property type="match status" value="1"/>
</dbReference>
<dbReference type="Gene3D" id="3.30.1140.32">
    <property type="entry name" value="Ribosomal protein S3, C-terminal domain"/>
    <property type="match status" value="1"/>
</dbReference>
<dbReference type="HAMAP" id="MF_01309_B">
    <property type="entry name" value="Ribosomal_uS3_B"/>
    <property type="match status" value="1"/>
</dbReference>
<dbReference type="InterPro" id="IPR004087">
    <property type="entry name" value="KH_dom"/>
</dbReference>
<dbReference type="InterPro" id="IPR015946">
    <property type="entry name" value="KH_dom-like_a/b"/>
</dbReference>
<dbReference type="InterPro" id="IPR004044">
    <property type="entry name" value="KH_dom_type_2"/>
</dbReference>
<dbReference type="InterPro" id="IPR009019">
    <property type="entry name" value="KH_sf_prok-type"/>
</dbReference>
<dbReference type="InterPro" id="IPR036419">
    <property type="entry name" value="Ribosomal_S3_C_sf"/>
</dbReference>
<dbReference type="InterPro" id="IPR005704">
    <property type="entry name" value="Ribosomal_uS3_bac-typ"/>
</dbReference>
<dbReference type="InterPro" id="IPR001351">
    <property type="entry name" value="Ribosomal_uS3_C"/>
</dbReference>
<dbReference type="InterPro" id="IPR018280">
    <property type="entry name" value="Ribosomal_uS3_CS"/>
</dbReference>
<dbReference type="NCBIfam" id="TIGR01009">
    <property type="entry name" value="rpsC_bact"/>
    <property type="match status" value="1"/>
</dbReference>
<dbReference type="PANTHER" id="PTHR11760">
    <property type="entry name" value="30S/40S RIBOSOMAL PROTEIN S3"/>
    <property type="match status" value="1"/>
</dbReference>
<dbReference type="PANTHER" id="PTHR11760:SF19">
    <property type="entry name" value="SMALL RIBOSOMAL SUBUNIT PROTEIN US3C"/>
    <property type="match status" value="1"/>
</dbReference>
<dbReference type="Pfam" id="PF07650">
    <property type="entry name" value="KH_2"/>
    <property type="match status" value="1"/>
</dbReference>
<dbReference type="Pfam" id="PF00189">
    <property type="entry name" value="Ribosomal_S3_C"/>
    <property type="match status" value="1"/>
</dbReference>
<dbReference type="SMART" id="SM00322">
    <property type="entry name" value="KH"/>
    <property type="match status" value="1"/>
</dbReference>
<dbReference type="SUPFAM" id="SSF54814">
    <property type="entry name" value="Prokaryotic type KH domain (KH-domain type II)"/>
    <property type="match status" value="1"/>
</dbReference>
<dbReference type="SUPFAM" id="SSF54821">
    <property type="entry name" value="Ribosomal protein S3 C-terminal domain"/>
    <property type="match status" value="1"/>
</dbReference>
<dbReference type="PROSITE" id="PS50823">
    <property type="entry name" value="KH_TYPE_2"/>
    <property type="match status" value="1"/>
</dbReference>
<dbReference type="PROSITE" id="PS00548">
    <property type="entry name" value="RIBOSOMAL_S3"/>
    <property type="match status" value="1"/>
</dbReference>
<protein>
    <recommendedName>
        <fullName evidence="1">Small ribosomal subunit protein uS3</fullName>
    </recommendedName>
    <alternativeName>
        <fullName evidence="3">30S ribosomal protein S3</fullName>
    </alternativeName>
</protein>
<comment type="function">
    <text evidence="1">Binds the lower part of the 30S subunit head. Binds mRNA in the 70S ribosome, positioning it for translation.</text>
</comment>
<comment type="subunit">
    <text evidence="1">Part of the 30S ribosomal subunit. Forms a tight complex with proteins S10 and S14.</text>
</comment>
<comment type="similarity">
    <text evidence="1">Belongs to the universal ribosomal protein uS3 family.</text>
</comment>
<proteinExistence type="inferred from homology"/>
<accession>C4LL46</accession>
<organism>
    <name type="scientific">Corynebacterium kroppenstedtii (strain DSM 44385 / JCM 11950 / CIP 105744 / CCUG 35717)</name>
    <dbReference type="NCBI Taxonomy" id="645127"/>
    <lineage>
        <taxon>Bacteria</taxon>
        <taxon>Bacillati</taxon>
        <taxon>Actinomycetota</taxon>
        <taxon>Actinomycetes</taxon>
        <taxon>Mycobacteriales</taxon>
        <taxon>Corynebacteriaceae</taxon>
        <taxon>Corynebacterium</taxon>
    </lineage>
</organism>